<proteinExistence type="inferred from homology"/>
<feature type="chain" id="PRO_0000374958" description="Ribosomal protein uS12 methylthiotransferase RimO">
    <location>
        <begin position="1"/>
        <end position="524"/>
    </location>
</feature>
<feature type="domain" description="MTTase N-terminal" evidence="1">
    <location>
        <begin position="67"/>
        <end position="177"/>
    </location>
</feature>
<feature type="domain" description="Radical SAM core" evidence="2">
    <location>
        <begin position="202"/>
        <end position="443"/>
    </location>
</feature>
<feature type="domain" description="TRAM" evidence="1">
    <location>
        <begin position="446"/>
        <end position="519"/>
    </location>
</feature>
<feature type="region of interest" description="Disordered" evidence="3">
    <location>
        <begin position="20"/>
        <end position="59"/>
    </location>
</feature>
<feature type="compositionally biased region" description="Polar residues" evidence="3">
    <location>
        <begin position="20"/>
        <end position="31"/>
    </location>
</feature>
<feature type="compositionally biased region" description="Low complexity" evidence="3">
    <location>
        <begin position="48"/>
        <end position="58"/>
    </location>
</feature>
<feature type="binding site" evidence="1">
    <location>
        <position position="76"/>
    </location>
    <ligand>
        <name>[4Fe-4S] cluster</name>
        <dbReference type="ChEBI" id="CHEBI:49883"/>
        <label>1</label>
    </ligand>
</feature>
<feature type="binding site" evidence="1">
    <location>
        <position position="112"/>
    </location>
    <ligand>
        <name>[4Fe-4S] cluster</name>
        <dbReference type="ChEBI" id="CHEBI:49883"/>
        <label>1</label>
    </ligand>
</feature>
<feature type="binding site" evidence="1">
    <location>
        <position position="141"/>
    </location>
    <ligand>
        <name>[4Fe-4S] cluster</name>
        <dbReference type="ChEBI" id="CHEBI:49883"/>
        <label>1</label>
    </ligand>
</feature>
<feature type="binding site" evidence="1">
    <location>
        <position position="216"/>
    </location>
    <ligand>
        <name>[4Fe-4S] cluster</name>
        <dbReference type="ChEBI" id="CHEBI:49883"/>
        <label>2</label>
        <note>4Fe-4S-S-AdoMet</note>
    </ligand>
</feature>
<feature type="binding site" evidence="1">
    <location>
        <position position="220"/>
    </location>
    <ligand>
        <name>[4Fe-4S] cluster</name>
        <dbReference type="ChEBI" id="CHEBI:49883"/>
        <label>2</label>
        <note>4Fe-4S-S-AdoMet</note>
    </ligand>
</feature>
<feature type="binding site" evidence="1">
    <location>
        <position position="223"/>
    </location>
    <ligand>
        <name>[4Fe-4S] cluster</name>
        <dbReference type="ChEBI" id="CHEBI:49883"/>
        <label>2</label>
        <note>4Fe-4S-S-AdoMet</note>
    </ligand>
</feature>
<sequence>MPSKNPADTVSIYVPGASINSQTASDSTQPAASAYHHKANHNQNRSIEQSAQQAAEQSLHTAETVAPKVGFVSLGCPKALVDSERIITELTRDGYRVASDYNGADLVVVNTCGFIESAVQESLDAIGEALNKNGKVIVTGCLGKDAQKIRDMHPAVLAVTGAHAYDEVITAVSTHAPMPQAIQDKKAYDPKIDLIDLAGVKLTPSHYAYLKISEGCNHRCTFCIIPSLRGDLLSRPIEQVMGEAMALKKAGVKEILVISQDTSAYGVDLKYKTSFWDGMPLKSKFFDMCQALAKVGIWVRLHYVYPYPHVDKVVELMAKPGDRGGLLPYLDIPLQHASPSVLKAMKRPAHSENTLARIQKWREINPDIVIRSTFVVGFPGETEEDFEYLLEWLKQAKLDRVGCFTYSEIEGAVANDLPNPVPEAIKQERYERFMAVQQQISEQKLQEKVGKTMTVLVDEIDTEEQIAICRSYADAPEIDGHVYVDNIVQNGMMMVKVGDMLTVTIDEASEYDLFASYDAVQALA</sequence>
<name>RIMO_PSYWF</name>
<gene>
    <name evidence="1" type="primary">rimO</name>
    <name type="ordered locus">PsycPRwf_1803</name>
</gene>
<accession>A5WGF2</accession>
<evidence type="ECO:0000255" key="1">
    <source>
        <dbReference type="HAMAP-Rule" id="MF_01865"/>
    </source>
</evidence>
<evidence type="ECO:0000255" key="2">
    <source>
        <dbReference type="PROSITE-ProRule" id="PRU01266"/>
    </source>
</evidence>
<evidence type="ECO:0000256" key="3">
    <source>
        <dbReference type="SAM" id="MobiDB-lite"/>
    </source>
</evidence>
<protein>
    <recommendedName>
        <fullName evidence="1">Ribosomal protein uS12 methylthiotransferase RimO</fullName>
        <shortName evidence="1">uS12 MTTase</shortName>
        <shortName evidence="1">uS12 methylthiotransferase</shortName>
        <ecNumber evidence="1">2.8.4.4</ecNumber>
    </recommendedName>
    <alternativeName>
        <fullName evidence="1">Ribosomal protein uS12 (aspartate-C(3))-methylthiotransferase</fullName>
    </alternativeName>
    <alternativeName>
        <fullName evidence="1">Ribosome maturation factor RimO</fullName>
    </alternativeName>
</protein>
<reference key="1">
    <citation type="submission" date="2007-05" db="EMBL/GenBank/DDBJ databases">
        <title>Complete sequence of chromosome of Psychrobacter sp. PRwf-1.</title>
        <authorList>
            <consortium name="US DOE Joint Genome Institute"/>
            <person name="Copeland A."/>
            <person name="Lucas S."/>
            <person name="Lapidus A."/>
            <person name="Barry K."/>
            <person name="Detter J.C."/>
            <person name="Glavina del Rio T."/>
            <person name="Hammon N."/>
            <person name="Israni S."/>
            <person name="Dalin E."/>
            <person name="Tice H."/>
            <person name="Pitluck S."/>
            <person name="Chain P."/>
            <person name="Malfatti S."/>
            <person name="Shin M."/>
            <person name="Vergez L."/>
            <person name="Schmutz J."/>
            <person name="Larimer F."/>
            <person name="Land M."/>
            <person name="Hauser L."/>
            <person name="Kyrpides N."/>
            <person name="Kim E."/>
            <person name="Tiedje J."/>
            <person name="Richardson P."/>
        </authorList>
    </citation>
    <scope>NUCLEOTIDE SEQUENCE [LARGE SCALE GENOMIC DNA]</scope>
    <source>
        <strain>PRwf-1</strain>
    </source>
</reference>
<comment type="function">
    <text evidence="1">Catalyzes the methylthiolation of an aspartic acid residue of ribosomal protein uS12.</text>
</comment>
<comment type="catalytic activity">
    <reaction evidence="1">
        <text>L-aspartate(89)-[ribosomal protein uS12]-hydrogen + (sulfur carrier)-SH + AH2 + 2 S-adenosyl-L-methionine = 3-methylsulfanyl-L-aspartate(89)-[ribosomal protein uS12]-hydrogen + (sulfur carrier)-H + 5'-deoxyadenosine + L-methionine + A + S-adenosyl-L-homocysteine + 2 H(+)</text>
        <dbReference type="Rhea" id="RHEA:37087"/>
        <dbReference type="Rhea" id="RHEA-COMP:10460"/>
        <dbReference type="Rhea" id="RHEA-COMP:10461"/>
        <dbReference type="Rhea" id="RHEA-COMP:14737"/>
        <dbReference type="Rhea" id="RHEA-COMP:14739"/>
        <dbReference type="ChEBI" id="CHEBI:13193"/>
        <dbReference type="ChEBI" id="CHEBI:15378"/>
        <dbReference type="ChEBI" id="CHEBI:17319"/>
        <dbReference type="ChEBI" id="CHEBI:17499"/>
        <dbReference type="ChEBI" id="CHEBI:29917"/>
        <dbReference type="ChEBI" id="CHEBI:29961"/>
        <dbReference type="ChEBI" id="CHEBI:57844"/>
        <dbReference type="ChEBI" id="CHEBI:57856"/>
        <dbReference type="ChEBI" id="CHEBI:59789"/>
        <dbReference type="ChEBI" id="CHEBI:64428"/>
        <dbReference type="ChEBI" id="CHEBI:73599"/>
        <dbReference type="EC" id="2.8.4.4"/>
    </reaction>
</comment>
<comment type="cofactor">
    <cofactor evidence="1">
        <name>[4Fe-4S] cluster</name>
        <dbReference type="ChEBI" id="CHEBI:49883"/>
    </cofactor>
    <text evidence="1">Binds 2 [4Fe-4S] clusters. One cluster is coordinated with 3 cysteines and an exchangeable S-adenosyl-L-methionine.</text>
</comment>
<comment type="subcellular location">
    <subcellularLocation>
        <location evidence="1">Cytoplasm</location>
    </subcellularLocation>
</comment>
<comment type="similarity">
    <text evidence="1">Belongs to the methylthiotransferase family. RimO subfamily.</text>
</comment>
<keyword id="KW-0004">4Fe-4S</keyword>
<keyword id="KW-0963">Cytoplasm</keyword>
<keyword id="KW-0408">Iron</keyword>
<keyword id="KW-0411">Iron-sulfur</keyword>
<keyword id="KW-0479">Metal-binding</keyword>
<keyword id="KW-0949">S-adenosyl-L-methionine</keyword>
<keyword id="KW-0808">Transferase</keyword>
<dbReference type="EC" id="2.8.4.4" evidence="1"/>
<dbReference type="EMBL" id="CP000713">
    <property type="protein sequence ID" value="ABQ94743.1"/>
    <property type="molecule type" value="Genomic_DNA"/>
</dbReference>
<dbReference type="SMR" id="A5WGF2"/>
<dbReference type="STRING" id="349106.PsycPRwf_1803"/>
<dbReference type="KEGG" id="prw:PsycPRwf_1803"/>
<dbReference type="eggNOG" id="COG0621">
    <property type="taxonomic scope" value="Bacteria"/>
</dbReference>
<dbReference type="HOGENOM" id="CLU_018697_0_0_6"/>
<dbReference type="GO" id="GO:0005829">
    <property type="term" value="C:cytosol"/>
    <property type="evidence" value="ECO:0007669"/>
    <property type="project" value="TreeGrafter"/>
</dbReference>
<dbReference type="GO" id="GO:0051539">
    <property type="term" value="F:4 iron, 4 sulfur cluster binding"/>
    <property type="evidence" value="ECO:0007669"/>
    <property type="project" value="UniProtKB-UniRule"/>
</dbReference>
<dbReference type="GO" id="GO:0035599">
    <property type="term" value="F:aspartic acid methylthiotransferase activity"/>
    <property type="evidence" value="ECO:0007669"/>
    <property type="project" value="TreeGrafter"/>
</dbReference>
<dbReference type="GO" id="GO:0046872">
    <property type="term" value="F:metal ion binding"/>
    <property type="evidence" value="ECO:0007669"/>
    <property type="project" value="UniProtKB-KW"/>
</dbReference>
<dbReference type="GO" id="GO:0103039">
    <property type="term" value="F:protein methylthiotransferase activity"/>
    <property type="evidence" value="ECO:0007669"/>
    <property type="project" value="UniProtKB-EC"/>
</dbReference>
<dbReference type="GO" id="GO:0006400">
    <property type="term" value="P:tRNA modification"/>
    <property type="evidence" value="ECO:0007669"/>
    <property type="project" value="InterPro"/>
</dbReference>
<dbReference type="CDD" id="cd01335">
    <property type="entry name" value="Radical_SAM"/>
    <property type="match status" value="1"/>
</dbReference>
<dbReference type="FunFam" id="3.40.50.12160:FF:000002">
    <property type="entry name" value="Ribosomal protein S12 methylthiotransferase RimO"/>
    <property type="match status" value="1"/>
</dbReference>
<dbReference type="FunFam" id="3.80.30.20:FF:000001">
    <property type="entry name" value="tRNA-2-methylthio-N(6)-dimethylallyladenosine synthase 2"/>
    <property type="match status" value="1"/>
</dbReference>
<dbReference type="Gene3D" id="3.40.50.12160">
    <property type="entry name" value="Methylthiotransferase, N-terminal domain"/>
    <property type="match status" value="1"/>
</dbReference>
<dbReference type="Gene3D" id="2.40.50.140">
    <property type="entry name" value="Nucleic acid-binding proteins"/>
    <property type="match status" value="1"/>
</dbReference>
<dbReference type="Gene3D" id="3.80.30.20">
    <property type="entry name" value="tm_1862 like domain"/>
    <property type="match status" value="1"/>
</dbReference>
<dbReference type="HAMAP" id="MF_01865">
    <property type="entry name" value="MTTase_RimO"/>
    <property type="match status" value="1"/>
</dbReference>
<dbReference type="InterPro" id="IPR006638">
    <property type="entry name" value="Elp3/MiaA/NifB-like_rSAM"/>
</dbReference>
<dbReference type="InterPro" id="IPR005839">
    <property type="entry name" value="Methylthiotransferase"/>
</dbReference>
<dbReference type="InterPro" id="IPR020612">
    <property type="entry name" value="Methylthiotransferase_CS"/>
</dbReference>
<dbReference type="InterPro" id="IPR013848">
    <property type="entry name" value="Methylthiotransferase_N"/>
</dbReference>
<dbReference type="InterPro" id="IPR038135">
    <property type="entry name" value="Methylthiotransferase_N_sf"/>
</dbReference>
<dbReference type="InterPro" id="IPR012340">
    <property type="entry name" value="NA-bd_OB-fold"/>
</dbReference>
<dbReference type="InterPro" id="IPR005840">
    <property type="entry name" value="Ribosomal_uS12_MeSTrfase_RimO"/>
</dbReference>
<dbReference type="InterPro" id="IPR007197">
    <property type="entry name" value="rSAM"/>
</dbReference>
<dbReference type="InterPro" id="IPR023404">
    <property type="entry name" value="rSAM_horseshoe"/>
</dbReference>
<dbReference type="InterPro" id="IPR002792">
    <property type="entry name" value="TRAM_dom"/>
</dbReference>
<dbReference type="NCBIfam" id="TIGR01125">
    <property type="entry name" value="30S ribosomal protein S12 methylthiotransferase RimO"/>
    <property type="match status" value="1"/>
</dbReference>
<dbReference type="NCBIfam" id="TIGR00089">
    <property type="entry name" value="MiaB/RimO family radical SAM methylthiotransferase"/>
    <property type="match status" value="1"/>
</dbReference>
<dbReference type="PANTHER" id="PTHR43837">
    <property type="entry name" value="RIBOSOMAL PROTEIN S12 METHYLTHIOTRANSFERASE RIMO"/>
    <property type="match status" value="1"/>
</dbReference>
<dbReference type="PANTHER" id="PTHR43837:SF1">
    <property type="entry name" value="RIBOSOMAL PROTEIN US12 METHYLTHIOTRANSFERASE RIMO"/>
    <property type="match status" value="1"/>
</dbReference>
<dbReference type="Pfam" id="PF04055">
    <property type="entry name" value="Radical_SAM"/>
    <property type="match status" value="1"/>
</dbReference>
<dbReference type="Pfam" id="PF18693">
    <property type="entry name" value="TRAM_2"/>
    <property type="match status" value="1"/>
</dbReference>
<dbReference type="Pfam" id="PF00919">
    <property type="entry name" value="UPF0004"/>
    <property type="match status" value="1"/>
</dbReference>
<dbReference type="SFLD" id="SFLDG01082">
    <property type="entry name" value="B12-binding_domain_containing"/>
    <property type="match status" value="1"/>
</dbReference>
<dbReference type="SFLD" id="SFLDG01061">
    <property type="entry name" value="methylthiotransferase"/>
    <property type="match status" value="1"/>
</dbReference>
<dbReference type="SFLD" id="SFLDF00274">
    <property type="entry name" value="ribosomal_protein_S12_methylth"/>
    <property type="match status" value="1"/>
</dbReference>
<dbReference type="SMART" id="SM00729">
    <property type="entry name" value="Elp3"/>
    <property type="match status" value="1"/>
</dbReference>
<dbReference type="SUPFAM" id="SSF102114">
    <property type="entry name" value="Radical SAM enzymes"/>
    <property type="match status" value="1"/>
</dbReference>
<dbReference type="PROSITE" id="PS51449">
    <property type="entry name" value="MTTASE_N"/>
    <property type="match status" value="1"/>
</dbReference>
<dbReference type="PROSITE" id="PS01278">
    <property type="entry name" value="MTTASE_RADICAL"/>
    <property type="match status" value="1"/>
</dbReference>
<dbReference type="PROSITE" id="PS51918">
    <property type="entry name" value="RADICAL_SAM"/>
    <property type="match status" value="1"/>
</dbReference>
<organism>
    <name type="scientific">Psychrobacter sp. (strain PRwf-1)</name>
    <dbReference type="NCBI Taxonomy" id="349106"/>
    <lineage>
        <taxon>Bacteria</taxon>
        <taxon>Pseudomonadati</taxon>
        <taxon>Pseudomonadota</taxon>
        <taxon>Gammaproteobacteria</taxon>
        <taxon>Moraxellales</taxon>
        <taxon>Moraxellaceae</taxon>
        <taxon>Psychrobacter</taxon>
    </lineage>
</organism>